<reference key="1">
    <citation type="journal article" date="1994" name="EMBO J.">
        <title>Complete DNA sequence of yeast chromosome II.</title>
        <authorList>
            <person name="Feldmann H."/>
            <person name="Aigle M."/>
            <person name="Aljinovic G."/>
            <person name="Andre B."/>
            <person name="Baclet M.C."/>
            <person name="Barthe C."/>
            <person name="Baur A."/>
            <person name="Becam A.-M."/>
            <person name="Biteau N."/>
            <person name="Boles E."/>
            <person name="Brandt T."/>
            <person name="Brendel M."/>
            <person name="Brueckner M."/>
            <person name="Bussereau F."/>
            <person name="Christiansen C."/>
            <person name="Contreras R."/>
            <person name="Crouzet M."/>
            <person name="Cziepluch C."/>
            <person name="Demolis N."/>
            <person name="Delaveau T."/>
            <person name="Doignon F."/>
            <person name="Domdey H."/>
            <person name="Duesterhus S."/>
            <person name="Dubois E."/>
            <person name="Dujon B."/>
            <person name="El Bakkoury M."/>
            <person name="Entian K.-D."/>
            <person name="Feuermann M."/>
            <person name="Fiers W."/>
            <person name="Fobo G.M."/>
            <person name="Fritz C."/>
            <person name="Gassenhuber J."/>
            <person name="Glansdorff N."/>
            <person name="Goffeau A."/>
            <person name="Grivell L.A."/>
            <person name="de Haan M."/>
            <person name="Hein C."/>
            <person name="Herbert C.J."/>
            <person name="Hollenberg C.P."/>
            <person name="Holmstroem K."/>
            <person name="Jacq C."/>
            <person name="Jacquet M."/>
            <person name="Jauniaux J.-C."/>
            <person name="Jonniaux J.-L."/>
            <person name="Kallesoee T."/>
            <person name="Kiesau P."/>
            <person name="Kirchrath L."/>
            <person name="Koetter P."/>
            <person name="Korol S."/>
            <person name="Liebl S."/>
            <person name="Logghe M."/>
            <person name="Lohan A.J.E."/>
            <person name="Louis E.J."/>
            <person name="Li Z.Y."/>
            <person name="Maat M.J."/>
            <person name="Mallet L."/>
            <person name="Mannhaupt G."/>
            <person name="Messenguy F."/>
            <person name="Miosga T."/>
            <person name="Molemans F."/>
            <person name="Mueller S."/>
            <person name="Nasr F."/>
            <person name="Obermaier B."/>
            <person name="Perea J."/>
            <person name="Pierard A."/>
            <person name="Piravandi E."/>
            <person name="Pohl F.M."/>
            <person name="Pohl T.M."/>
            <person name="Potier S."/>
            <person name="Proft M."/>
            <person name="Purnelle B."/>
            <person name="Ramezani Rad M."/>
            <person name="Rieger M."/>
            <person name="Rose M."/>
            <person name="Schaaff-Gerstenschlaeger I."/>
            <person name="Scherens B."/>
            <person name="Schwarzlose C."/>
            <person name="Skala J."/>
            <person name="Slonimski P.P."/>
            <person name="Smits P.H.M."/>
            <person name="Souciet J.-L."/>
            <person name="Steensma H.Y."/>
            <person name="Stucka R."/>
            <person name="Urrestarazu L.A."/>
            <person name="van der Aart Q.J.M."/>
            <person name="Van Dyck L."/>
            <person name="Vassarotti A."/>
            <person name="Vetter I."/>
            <person name="Vierendeels F."/>
            <person name="Vissers S."/>
            <person name="Wagner G."/>
            <person name="de Wergifosse P."/>
            <person name="Wolfe K.H."/>
            <person name="Zagulski M."/>
            <person name="Zimmermann F.K."/>
            <person name="Mewes H.-W."/>
            <person name="Kleine K."/>
        </authorList>
    </citation>
    <scope>NUCLEOTIDE SEQUENCE [LARGE SCALE GENOMIC DNA]</scope>
    <source>
        <strain>ATCC 204508 / S288c</strain>
    </source>
</reference>
<reference key="2">
    <citation type="journal article" date="2014" name="G3 (Bethesda)">
        <title>The reference genome sequence of Saccharomyces cerevisiae: Then and now.</title>
        <authorList>
            <person name="Engel S.R."/>
            <person name="Dietrich F.S."/>
            <person name="Fisk D.G."/>
            <person name="Binkley G."/>
            <person name="Balakrishnan R."/>
            <person name="Costanzo M.C."/>
            <person name="Dwight S.S."/>
            <person name="Hitz B.C."/>
            <person name="Karra K."/>
            <person name="Nash R.S."/>
            <person name="Weng S."/>
            <person name="Wong E.D."/>
            <person name="Lloyd P."/>
            <person name="Skrzypek M.S."/>
            <person name="Miyasato S.R."/>
            <person name="Simison M."/>
            <person name="Cherry J.M."/>
        </authorList>
    </citation>
    <scope>GENOME REANNOTATION</scope>
    <source>
        <strain>ATCC 204508 / S288c</strain>
    </source>
</reference>
<reference key="3">
    <citation type="journal article" date="2003" name="Nature">
        <title>Global analysis of protein localization in budding yeast.</title>
        <authorList>
            <person name="Huh W.-K."/>
            <person name="Falvo J.V."/>
            <person name="Gerke L.C."/>
            <person name="Carroll A.S."/>
            <person name="Howson R.W."/>
            <person name="Weissman J.S."/>
            <person name="O'Shea E.K."/>
        </authorList>
    </citation>
    <scope>SUBCELLULAR LOCATION [LARGE SCALE ANALYSIS]</scope>
</reference>
<reference key="4">
    <citation type="journal article" date="2003" name="Nature">
        <title>Global analysis of protein expression in yeast.</title>
        <authorList>
            <person name="Ghaemmaghami S."/>
            <person name="Huh W.-K."/>
            <person name="Bower K."/>
            <person name="Howson R.W."/>
            <person name="Belle A."/>
            <person name="Dephoure N."/>
            <person name="O'Shea E.K."/>
            <person name="Weissman J.S."/>
        </authorList>
    </citation>
    <scope>LEVEL OF PROTEIN EXPRESSION [LARGE SCALE ANALYSIS]</scope>
</reference>
<reference key="5">
    <citation type="journal article" date="2004" name="Mol. Cell. Biol.">
        <title>Microbial synergy via an ethanol-triggered pathway.</title>
        <authorList>
            <person name="Smith M.G."/>
            <person name="Des Etages S.G."/>
            <person name="Snyder M."/>
        </authorList>
    </citation>
    <scope>FUNCTION</scope>
</reference>
<reference key="6">
    <citation type="journal article" date="2012" name="FEMS Yeast Res.">
        <title>Molecular and physiological aspects of alcohol dehydrogenases in the ethanol metabolism of Saccharomyces cerevisiae.</title>
        <authorList>
            <person name="de Smidt O."/>
            <person name="du Preez J.C."/>
            <person name="Albertyn J."/>
        </authorList>
    </citation>
    <scope>FUNCTION</scope>
</reference>
<comment type="function">
    <text evidence="4 6">Can reduces acetaldehyde to ethanol (Probable). The role of ADH5 in yeast metabolism is not yet known, but ADH5 is not responsible for the production of ethanol during growth on glucose nor responsible for the oxidation of ethanol to acetaldehyde (PubMed:22094012).</text>
</comment>
<comment type="catalytic activity">
    <reaction evidence="1">
        <text>a primary alcohol + NAD(+) = an aldehyde + NADH + H(+)</text>
        <dbReference type="Rhea" id="RHEA:10736"/>
        <dbReference type="ChEBI" id="CHEBI:15378"/>
        <dbReference type="ChEBI" id="CHEBI:15734"/>
        <dbReference type="ChEBI" id="CHEBI:17478"/>
        <dbReference type="ChEBI" id="CHEBI:57540"/>
        <dbReference type="ChEBI" id="CHEBI:57945"/>
        <dbReference type="EC" id="1.1.1.1"/>
    </reaction>
</comment>
<comment type="catalytic activity">
    <reaction evidence="1">
        <text>a secondary alcohol + NAD(+) = a ketone + NADH + H(+)</text>
        <dbReference type="Rhea" id="RHEA:10740"/>
        <dbReference type="ChEBI" id="CHEBI:15378"/>
        <dbReference type="ChEBI" id="CHEBI:17087"/>
        <dbReference type="ChEBI" id="CHEBI:35681"/>
        <dbReference type="ChEBI" id="CHEBI:57540"/>
        <dbReference type="ChEBI" id="CHEBI:57945"/>
        <dbReference type="EC" id="1.1.1.1"/>
    </reaction>
</comment>
<comment type="cofactor">
    <cofactor evidence="1">
        <name>Zn(2+)</name>
        <dbReference type="ChEBI" id="CHEBI:29105"/>
    </cofactor>
    <text evidence="1">Binds 2 Zn(2+) ions per subunit.</text>
</comment>
<comment type="subcellular location">
    <subcellularLocation>
        <location evidence="2">Cytoplasm</location>
    </subcellularLocation>
</comment>
<comment type="miscellaneous">
    <text evidence="3">Present with 1310 molecules/cell in log phase SD medium.</text>
</comment>
<comment type="similarity">
    <text evidence="5">Belongs to the zinc-containing alcohol dehydrogenase family.</text>
</comment>
<evidence type="ECO:0000250" key="1">
    <source>
        <dbReference type="UniProtKB" id="P00330"/>
    </source>
</evidence>
<evidence type="ECO:0000269" key="2">
    <source>
    </source>
</evidence>
<evidence type="ECO:0000269" key="3">
    <source>
    </source>
</evidence>
<evidence type="ECO:0000269" key="4">
    <source>
    </source>
</evidence>
<evidence type="ECO:0000305" key="5"/>
<evidence type="ECO:0000305" key="6">
    <source>
    </source>
</evidence>
<feature type="chain" id="PRO_0000160733" description="Alcohol dehydrogenase 5">
    <location>
        <begin position="1"/>
        <end position="351"/>
    </location>
</feature>
<feature type="binding site" evidence="1">
    <location>
        <position position="47"/>
    </location>
    <ligand>
        <name>Zn(2+)</name>
        <dbReference type="ChEBI" id="CHEBI:29105"/>
        <label>1</label>
        <note>catalytic</note>
    </ligand>
</feature>
<feature type="binding site" evidence="1">
    <location>
        <position position="48"/>
    </location>
    <ligand>
        <name>NAD(+)</name>
        <dbReference type="ChEBI" id="CHEBI:57540"/>
    </ligand>
</feature>
<feature type="binding site" evidence="1">
    <location>
        <position position="49"/>
    </location>
    <ligand>
        <name>NAD(+)</name>
        <dbReference type="ChEBI" id="CHEBI:57540"/>
    </ligand>
</feature>
<feature type="binding site" evidence="1">
    <location>
        <position position="52"/>
    </location>
    <ligand>
        <name>NAD(+)</name>
        <dbReference type="ChEBI" id="CHEBI:57540"/>
    </ligand>
</feature>
<feature type="binding site" evidence="1">
    <location>
        <position position="70"/>
    </location>
    <ligand>
        <name>Zn(2+)</name>
        <dbReference type="ChEBI" id="CHEBI:29105"/>
        <label>1</label>
        <note>catalytic</note>
    </ligand>
</feature>
<feature type="binding site" evidence="1">
    <location>
        <position position="71"/>
    </location>
    <ligand>
        <name>Zn(2+)</name>
        <dbReference type="ChEBI" id="CHEBI:29105"/>
        <label>1</label>
        <note>catalytic</note>
    </ligand>
</feature>
<feature type="binding site" evidence="1">
    <location>
        <position position="101"/>
    </location>
    <ligand>
        <name>Zn(2+)</name>
        <dbReference type="ChEBI" id="CHEBI:29105"/>
        <label>2</label>
    </ligand>
</feature>
<feature type="binding site" evidence="1">
    <location>
        <position position="104"/>
    </location>
    <ligand>
        <name>Zn(2+)</name>
        <dbReference type="ChEBI" id="CHEBI:29105"/>
        <label>2</label>
    </ligand>
</feature>
<feature type="binding site" evidence="1">
    <location>
        <position position="107"/>
    </location>
    <ligand>
        <name>Zn(2+)</name>
        <dbReference type="ChEBI" id="CHEBI:29105"/>
        <label>2</label>
    </ligand>
</feature>
<feature type="binding site" evidence="1">
    <location>
        <position position="115"/>
    </location>
    <ligand>
        <name>Zn(2+)</name>
        <dbReference type="ChEBI" id="CHEBI:29105"/>
        <label>2</label>
    </ligand>
</feature>
<feature type="binding site" evidence="1">
    <location>
        <position position="157"/>
    </location>
    <ligand>
        <name>Zn(2+)</name>
        <dbReference type="ChEBI" id="CHEBI:29105"/>
        <label>1</label>
        <note>catalytic</note>
    </ligand>
</feature>
<feature type="binding site" evidence="1">
    <location>
        <position position="184"/>
    </location>
    <ligand>
        <name>NAD(+)</name>
        <dbReference type="ChEBI" id="CHEBI:57540"/>
    </ligand>
</feature>
<feature type="binding site" evidence="1">
    <location>
        <position position="185"/>
    </location>
    <ligand>
        <name>NAD(+)</name>
        <dbReference type="ChEBI" id="CHEBI:57540"/>
    </ligand>
</feature>
<feature type="binding site" evidence="1">
    <location>
        <position position="186"/>
    </location>
    <ligand>
        <name>NAD(+)</name>
        <dbReference type="ChEBI" id="CHEBI:57540"/>
    </ligand>
</feature>
<feature type="binding site" evidence="1">
    <location>
        <position position="205"/>
    </location>
    <ligand>
        <name>NAD(+)</name>
        <dbReference type="ChEBI" id="CHEBI:57540"/>
    </ligand>
</feature>
<feature type="binding site" evidence="1">
    <location>
        <position position="210"/>
    </location>
    <ligand>
        <name>NAD(+)</name>
        <dbReference type="ChEBI" id="CHEBI:57540"/>
    </ligand>
</feature>
<feature type="binding site" evidence="1">
    <location>
        <position position="225"/>
    </location>
    <ligand>
        <name>NAD(+)</name>
        <dbReference type="ChEBI" id="CHEBI:57540"/>
    </ligand>
</feature>
<feature type="binding site" evidence="1">
    <location>
        <position position="272"/>
    </location>
    <ligand>
        <name>NAD(+)</name>
        <dbReference type="ChEBI" id="CHEBI:57540"/>
    </ligand>
</feature>
<feature type="binding site" evidence="1">
    <location>
        <position position="274"/>
    </location>
    <ligand>
        <name>NAD(+)</name>
        <dbReference type="ChEBI" id="CHEBI:57540"/>
    </ligand>
</feature>
<feature type="binding site" evidence="1">
    <location>
        <position position="297"/>
    </location>
    <ligand>
        <name>NAD(+)</name>
        <dbReference type="ChEBI" id="CHEBI:57540"/>
    </ligand>
</feature>
<feature type="binding site" evidence="1">
    <location>
        <position position="299"/>
    </location>
    <ligand>
        <name>NAD(+)</name>
        <dbReference type="ChEBI" id="CHEBI:57540"/>
    </ligand>
</feature>
<feature type="binding site" evidence="1">
    <location>
        <position position="344"/>
    </location>
    <ligand>
        <name>NAD(+)</name>
        <dbReference type="ChEBI" id="CHEBI:57540"/>
    </ligand>
</feature>
<feature type="modified residue" description="Phosphothreonine" evidence="1">
    <location>
        <position position="226"/>
    </location>
</feature>
<feature type="modified residue" description="Phosphoserine" evidence="1">
    <location>
        <position position="282"/>
    </location>
</feature>
<feature type="modified residue" description="Phosphoserine" evidence="1">
    <location>
        <position position="319"/>
    </location>
</feature>
<feature type="cross-link" description="Glycyl lysine isopeptide (Lys-Gly) (interchain with G-Cter in ubiquitin)" evidence="1">
    <location>
        <position position="229"/>
    </location>
</feature>
<feature type="cross-link" description="Glycyl lysine isopeptide (Lys-Gly) (interchain with G-Cter in ubiquitin)" evidence="1">
    <location>
        <position position="237"/>
    </location>
</feature>
<feature type="cross-link" description="Glycyl lysine isopeptide (Lys-Gly) (interchain with G-Cter in ubiquitin)" evidence="1">
    <location>
        <position position="290"/>
    </location>
</feature>
<gene>
    <name type="primary">ADH5</name>
    <name type="ordered locus">YBR145W</name>
    <name type="ORF">YBR1122</name>
</gene>
<accession>P38113</accession>
<accession>D6VQE0</accession>
<organism>
    <name type="scientific">Saccharomyces cerevisiae (strain ATCC 204508 / S288c)</name>
    <name type="common">Baker's yeast</name>
    <dbReference type="NCBI Taxonomy" id="559292"/>
    <lineage>
        <taxon>Eukaryota</taxon>
        <taxon>Fungi</taxon>
        <taxon>Dikarya</taxon>
        <taxon>Ascomycota</taxon>
        <taxon>Saccharomycotina</taxon>
        <taxon>Saccharomycetes</taxon>
        <taxon>Saccharomycetales</taxon>
        <taxon>Saccharomycetaceae</taxon>
        <taxon>Saccharomyces</taxon>
    </lineage>
</organism>
<sequence length="351" mass="37648">MPSQVIPEKQKAIVFYETDGKLEYKDVTVPEPKPNEILVHVKYSGVCHSDLHAWHGDWPFQLKFPLIGGHEGAGVVVKLGSNVKGWKVGDFAGIKWLNGTCMSCEYCEVGNESQCPYLDGTGFTHDGTFQEYATADAVQAAHIPPNVNLAEVAPILCAGITVYKALKRANVIPGQWVTISGACGGLGSLAIQYALAMGYRVIGIDGGNAKRKLFEQLGGEIFIDFTEEKDIVGAIIKATNGGSHGVINVSVSEAAIEASTRYCRPNGTVVLVGMPAHAYCNSDVFNQVVKSISIVGSCVGNRADTREALDFFARGLIKSPIHLAGLSDVPEIFAKMEKGEIVGRYVVETSK</sequence>
<protein>
    <recommendedName>
        <fullName evidence="5">Alcohol dehydrogenase 5</fullName>
        <ecNumber evidence="1">1.1.1.1</ecNumber>
    </recommendedName>
    <alternativeName>
        <fullName>Alcohol dehydrogenase V</fullName>
    </alternativeName>
</protein>
<proteinExistence type="evidence at protein level"/>
<dbReference type="EC" id="1.1.1.1" evidence="1"/>
<dbReference type="EMBL" id="Z36014">
    <property type="protein sequence ID" value="CAA85103.1"/>
    <property type="molecule type" value="Genomic_DNA"/>
</dbReference>
<dbReference type="EMBL" id="BK006936">
    <property type="protein sequence ID" value="DAA07260.1"/>
    <property type="molecule type" value="Genomic_DNA"/>
</dbReference>
<dbReference type="PIR" id="S46016">
    <property type="entry name" value="S46016"/>
</dbReference>
<dbReference type="RefSeq" id="NP_009703.3">
    <property type="nucleotide sequence ID" value="NM_001178493.3"/>
</dbReference>
<dbReference type="SMR" id="P38113"/>
<dbReference type="BioGRID" id="32844">
    <property type="interactions" value="136"/>
</dbReference>
<dbReference type="DIP" id="DIP-4500N"/>
<dbReference type="FunCoup" id="P38113">
    <property type="interactions" value="207"/>
</dbReference>
<dbReference type="IntAct" id="P38113">
    <property type="interactions" value="8"/>
</dbReference>
<dbReference type="STRING" id="4932.YBR145W"/>
<dbReference type="iPTMnet" id="P38113"/>
<dbReference type="PaxDb" id="4932-YBR145W"/>
<dbReference type="PeptideAtlas" id="P38113"/>
<dbReference type="EnsemblFungi" id="YBR145W_mRNA">
    <property type="protein sequence ID" value="YBR145W"/>
    <property type="gene ID" value="YBR145W"/>
</dbReference>
<dbReference type="GeneID" id="852442"/>
<dbReference type="KEGG" id="sce:YBR145W"/>
<dbReference type="AGR" id="SGD:S000000349"/>
<dbReference type="SGD" id="S000000349">
    <property type="gene designation" value="ADH5"/>
</dbReference>
<dbReference type="VEuPathDB" id="FungiDB:YBR145W"/>
<dbReference type="eggNOG" id="KOG0023">
    <property type="taxonomic scope" value="Eukaryota"/>
</dbReference>
<dbReference type="GeneTree" id="ENSGT00940000171159"/>
<dbReference type="HOGENOM" id="CLU_026673_20_1_1"/>
<dbReference type="InParanoid" id="P38113"/>
<dbReference type="OMA" id="AFPHVKP"/>
<dbReference type="OrthoDB" id="1879366at2759"/>
<dbReference type="BioCyc" id="MetaCyc:YBR145W-MONOMER"/>
<dbReference type="BioCyc" id="YEAST:YBR145W-MONOMER"/>
<dbReference type="SABIO-RK" id="P38113"/>
<dbReference type="BioGRID-ORCS" id="852442">
    <property type="hits" value="5 hits in 10 CRISPR screens"/>
</dbReference>
<dbReference type="PRO" id="PR:P38113"/>
<dbReference type="Proteomes" id="UP000002311">
    <property type="component" value="Chromosome II"/>
</dbReference>
<dbReference type="RNAct" id="P38113">
    <property type="molecule type" value="protein"/>
</dbReference>
<dbReference type="GO" id="GO:0005737">
    <property type="term" value="C:cytoplasm"/>
    <property type="evidence" value="ECO:0007005"/>
    <property type="project" value="SGD"/>
</dbReference>
<dbReference type="GO" id="GO:0005634">
    <property type="term" value="C:nucleus"/>
    <property type="evidence" value="ECO:0007005"/>
    <property type="project" value="SGD"/>
</dbReference>
<dbReference type="GO" id="GO:0004022">
    <property type="term" value="F:alcohol dehydrogenase (NAD+) activity"/>
    <property type="evidence" value="ECO:0000250"/>
    <property type="project" value="SGD"/>
</dbReference>
<dbReference type="GO" id="GO:0008270">
    <property type="term" value="F:zinc ion binding"/>
    <property type="evidence" value="ECO:0007669"/>
    <property type="project" value="InterPro"/>
</dbReference>
<dbReference type="GO" id="GO:0000947">
    <property type="term" value="P:amino acid catabolic process to alcohol via Ehrlich pathway"/>
    <property type="evidence" value="ECO:0000316"/>
    <property type="project" value="SGD"/>
</dbReference>
<dbReference type="GO" id="GO:0019655">
    <property type="term" value="P:glycolytic fermentation to ethanol"/>
    <property type="evidence" value="ECO:0000315"/>
    <property type="project" value="SGD"/>
</dbReference>
<dbReference type="CDD" id="cd08297">
    <property type="entry name" value="CAD3"/>
    <property type="match status" value="1"/>
</dbReference>
<dbReference type="FunFam" id="3.40.50.720:FF:000039">
    <property type="entry name" value="Alcohol dehydrogenase AdhP"/>
    <property type="match status" value="1"/>
</dbReference>
<dbReference type="FunFam" id="3.90.180.10:FF:000002">
    <property type="entry name" value="Alcohol dehydrogenase AdhP"/>
    <property type="match status" value="1"/>
</dbReference>
<dbReference type="Gene3D" id="3.90.180.10">
    <property type="entry name" value="Medium-chain alcohol dehydrogenases, catalytic domain"/>
    <property type="match status" value="1"/>
</dbReference>
<dbReference type="Gene3D" id="3.40.50.720">
    <property type="entry name" value="NAD(P)-binding Rossmann-like Domain"/>
    <property type="match status" value="1"/>
</dbReference>
<dbReference type="InterPro" id="IPR013149">
    <property type="entry name" value="ADH-like_C"/>
</dbReference>
<dbReference type="InterPro" id="IPR013154">
    <property type="entry name" value="ADH-like_N"/>
</dbReference>
<dbReference type="InterPro" id="IPR002328">
    <property type="entry name" value="ADH_Zn_CS"/>
</dbReference>
<dbReference type="InterPro" id="IPR011032">
    <property type="entry name" value="GroES-like_sf"/>
</dbReference>
<dbReference type="InterPro" id="IPR036291">
    <property type="entry name" value="NAD(P)-bd_dom_sf"/>
</dbReference>
<dbReference type="InterPro" id="IPR020843">
    <property type="entry name" value="PKS_ER"/>
</dbReference>
<dbReference type="PANTHER" id="PTHR42940">
    <property type="entry name" value="ALCOHOL DEHYDROGENASE 1-RELATED"/>
    <property type="match status" value="1"/>
</dbReference>
<dbReference type="PANTHER" id="PTHR42940:SF3">
    <property type="entry name" value="ALCOHOL DEHYDROGENASE 1-RELATED"/>
    <property type="match status" value="1"/>
</dbReference>
<dbReference type="Pfam" id="PF08240">
    <property type="entry name" value="ADH_N"/>
    <property type="match status" value="1"/>
</dbReference>
<dbReference type="Pfam" id="PF00107">
    <property type="entry name" value="ADH_zinc_N"/>
    <property type="match status" value="1"/>
</dbReference>
<dbReference type="SMART" id="SM00829">
    <property type="entry name" value="PKS_ER"/>
    <property type="match status" value="1"/>
</dbReference>
<dbReference type="SUPFAM" id="SSF50129">
    <property type="entry name" value="GroES-like"/>
    <property type="match status" value="1"/>
</dbReference>
<dbReference type="SUPFAM" id="SSF51735">
    <property type="entry name" value="NAD(P)-binding Rossmann-fold domains"/>
    <property type="match status" value="1"/>
</dbReference>
<dbReference type="PROSITE" id="PS00059">
    <property type="entry name" value="ADH_ZINC"/>
    <property type="match status" value="1"/>
</dbReference>
<name>ADH5_YEAST</name>
<keyword id="KW-0963">Cytoplasm</keyword>
<keyword id="KW-1017">Isopeptide bond</keyword>
<keyword id="KW-0479">Metal-binding</keyword>
<keyword id="KW-0520">NAD</keyword>
<keyword id="KW-0560">Oxidoreductase</keyword>
<keyword id="KW-0597">Phosphoprotein</keyword>
<keyword id="KW-1185">Reference proteome</keyword>
<keyword id="KW-0832">Ubl conjugation</keyword>
<keyword id="KW-0862">Zinc</keyword>